<evidence type="ECO:0000255" key="1"/>
<evidence type="ECO:0000305" key="2"/>
<gene>
    <name type="primary">ins-21</name>
    <name type="ORF">M04D8.1</name>
</gene>
<accession>Q21507</accession>
<organism>
    <name type="scientific">Caenorhabditis elegans</name>
    <dbReference type="NCBI Taxonomy" id="6239"/>
    <lineage>
        <taxon>Eukaryota</taxon>
        <taxon>Metazoa</taxon>
        <taxon>Ecdysozoa</taxon>
        <taxon>Nematoda</taxon>
        <taxon>Chromadorea</taxon>
        <taxon>Rhabditida</taxon>
        <taxon>Rhabditina</taxon>
        <taxon>Rhabditomorpha</taxon>
        <taxon>Rhabditoidea</taxon>
        <taxon>Rhabditidae</taxon>
        <taxon>Peloderinae</taxon>
        <taxon>Caenorhabditis</taxon>
    </lineage>
</organism>
<feature type="signal peptide" evidence="1">
    <location>
        <begin position="1"/>
        <end position="24"/>
    </location>
</feature>
<feature type="chain" id="PRO_0000016213" description="Probable insulin-like peptide alpha-type 1">
    <location>
        <begin position="25"/>
        <end position="76"/>
    </location>
</feature>
<feature type="disulfide bond" evidence="1">
    <location>
        <begin position="32"/>
        <end position="60"/>
    </location>
</feature>
<feature type="disulfide bond" evidence="1">
    <location>
        <begin position="44"/>
        <end position="73"/>
    </location>
</feature>
<feature type="disulfide bond" evidence="1">
    <location>
        <begin position="48"/>
        <end position="74"/>
    </location>
</feature>
<comment type="subcellular location">
    <subcellularLocation>
        <location evidence="2">Secreted</location>
    </subcellularLocation>
</comment>
<comment type="similarity">
    <text evidence="2">Belongs to the insulin family.</text>
</comment>
<protein>
    <recommendedName>
        <fullName>Probable insulin-like peptide alpha-type 1</fullName>
    </recommendedName>
</protein>
<name>ILA1_CAEEL</name>
<keyword id="KW-1015">Disulfide bond</keyword>
<keyword id="KW-1185">Reference proteome</keyword>
<keyword id="KW-0964">Secreted</keyword>
<keyword id="KW-0732">Signal</keyword>
<dbReference type="EMBL" id="Z32682">
    <property type="protein sequence ID" value="CAA83610.2"/>
    <property type="molecule type" value="Genomic_DNA"/>
</dbReference>
<dbReference type="PIR" id="S43588">
    <property type="entry name" value="S43588"/>
</dbReference>
<dbReference type="RefSeq" id="NP_499222.2">
    <property type="nucleotide sequence ID" value="NM_066821.3"/>
</dbReference>
<dbReference type="SMR" id="Q21507"/>
<dbReference type="FunCoup" id="Q21507">
    <property type="interactions" value="316"/>
</dbReference>
<dbReference type="STRING" id="6239.M04D8.1.1"/>
<dbReference type="PaxDb" id="6239-M04D8.1"/>
<dbReference type="EnsemblMetazoa" id="M04D8.1.1">
    <property type="protein sequence ID" value="M04D8.1.1"/>
    <property type="gene ID" value="WBGene00002104"/>
</dbReference>
<dbReference type="GeneID" id="191689"/>
<dbReference type="KEGG" id="cel:CELE_M04D8.1"/>
<dbReference type="UCSC" id="M04D8.1">
    <property type="organism name" value="c. elegans"/>
</dbReference>
<dbReference type="AGR" id="WB:WBGene00002104"/>
<dbReference type="CTD" id="191689"/>
<dbReference type="WormBase" id="M04D8.1">
    <property type="protein sequence ID" value="CE35999"/>
    <property type="gene ID" value="WBGene00002104"/>
    <property type="gene designation" value="ins-21"/>
</dbReference>
<dbReference type="eggNOG" id="ENOG502TIT9">
    <property type="taxonomic scope" value="Eukaryota"/>
</dbReference>
<dbReference type="GeneTree" id="ENSGT00970000197132"/>
<dbReference type="HOGENOM" id="CLU_2673472_0_0_1"/>
<dbReference type="InParanoid" id="Q21507"/>
<dbReference type="OMA" id="CPDMCLT"/>
<dbReference type="OrthoDB" id="5837265at2759"/>
<dbReference type="PhylomeDB" id="Q21507"/>
<dbReference type="PRO" id="PR:Q21507"/>
<dbReference type="Proteomes" id="UP000001940">
    <property type="component" value="Chromosome III"/>
</dbReference>
<dbReference type="Bgee" id="WBGene00002104">
    <property type="expression patterns" value="Expressed in larva and 2 other cell types or tissues"/>
</dbReference>
<dbReference type="GO" id="GO:0005576">
    <property type="term" value="C:extracellular region"/>
    <property type="evidence" value="ECO:0007669"/>
    <property type="project" value="UniProtKB-SubCell"/>
</dbReference>
<dbReference type="Gene3D" id="1.10.100.10">
    <property type="entry name" value="Insulin-like"/>
    <property type="match status" value="1"/>
</dbReference>
<proteinExistence type="inferred from homology"/>
<sequence>MKTYSFFVLFIVFIFFISSSKSHSKKHVRFLCATKAVKHIRKVCPDMCLTGEEVEVNEFCKMGYSDSQIKYICCPE</sequence>
<reference key="1">
    <citation type="journal article" date="1998" name="Science">
        <title>Genome sequence of the nematode C. elegans: a platform for investigating biology.</title>
        <authorList>
            <consortium name="The C. elegans sequencing consortium"/>
        </authorList>
    </citation>
    <scope>NUCLEOTIDE SEQUENCE [LARGE SCALE GENOMIC DNA]</scope>
    <source>
        <strain>Bristol N2</strain>
    </source>
</reference>
<reference key="2">
    <citation type="journal article" date="1998" name="Genome Res.">
        <title>New insulin-like proteins with atypical disulfide bond pattern characterized in Caenorhabditis elegans by comparative sequence analysis and homology modeling.</title>
        <authorList>
            <person name="Duret L."/>
            <person name="Guex N."/>
            <person name="Peitsch M.C."/>
            <person name="Bairoch A."/>
        </authorList>
    </citation>
    <scope>SIMILARITY TO INSULIN</scope>
</reference>